<keyword id="KW-0067">ATP-binding</keyword>
<keyword id="KW-0342">GTP-binding</keyword>
<keyword id="KW-0547">Nucleotide-binding</keyword>
<keyword id="KW-0548">Nucleotidyltransferase</keyword>
<keyword id="KW-0808">Transferase</keyword>
<dbReference type="EC" id="2.7.7.4" evidence="2"/>
<dbReference type="EMBL" id="AE017220">
    <property type="protein sequence ID" value="AAX66772.1"/>
    <property type="molecule type" value="Genomic_DNA"/>
</dbReference>
<dbReference type="RefSeq" id="WP_001092261.1">
    <property type="nucleotide sequence ID" value="NC_006905.1"/>
</dbReference>
<dbReference type="SMR" id="Q57KJ0"/>
<dbReference type="KEGG" id="sec:SCH_2866"/>
<dbReference type="HOGENOM" id="CLU_007265_5_2_6"/>
<dbReference type="UniPathway" id="UPA00140">
    <property type="reaction ID" value="UER00204"/>
</dbReference>
<dbReference type="Proteomes" id="UP000000538">
    <property type="component" value="Chromosome"/>
</dbReference>
<dbReference type="GO" id="GO:0005524">
    <property type="term" value="F:ATP binding"/>
    <property type="evidence" value="ECO:0007669"/>
    <property type="project" value="UniProtKB-KW"/>
</dbReference>
<dbReference type="GO" id="GO:0005525">
    <property type="term" value="F:GTP binding"/>
    <property type="evidence" value="ECO:0007669"/>
    <property type="project" value="UniProtKB-UniRule"/>
</dbReference>
<dbReference type="GO" id="GO:0003924">
    <property type="term" value="F:GTPase activity"/>
    <property type="evidence" value="ECO:0007669"/>
    <property type="project" value="InterPro"/>
</dbReference>
<dbReference type="GO" id="GO:0004781">
    <property type="term" value="F:sulfate adenylyltransferase (ATP) activity"/>
    <property type="evidence" value="ECO:0007669"/>
    <property type="project" value="UniProtKB-UniRule"/>
</dbReference>
<dbReference type="GO" id="GO:0070814">
    <property type="term" value="P:hydrogen sulfide biosynthetic process"/>
    <property type="evidence" value="ECO:0007669"/>
    <property type="project" value="UniProtKB-UniRule"/>
</dbReference>
<dbReference type="GO" id="GO:0000103">
    <property type="term" value="P:sulfate assimilation"/>
    <property type="evidence" value="ECO:0007669"/>
    <property type="project" value="UniProtKB-UniRule"/>
</dbReference>
<dbReference type="CDD" id="cd04166">
    <property type="entry name" value="CysN_ATPS"/>
    <property type="match status" value="1"/>
</dbReference>
<dbReference type="CDD" id="cd03695">
    <property type="entry name" value="CysN_NodQ_II"/>
    <property type="match status" value="1"/>
</dbReference>
<dbReference type="CDD" id="cd04095">
    <property type="entry name" value="CysN_NoDQ_III"/>
    <property type="match status" value="1"/>
</dbReference>
<dbReference type="FunFam" id="2.40.30.10:FF:000027">
    <property type="entry name" value="Sulfate adenylyltransferase subunit 1"/>
    <property type="match status" value="1"/>
</dbReference>
<dbReference type="FunFam" id="2.40.30.10:FF:000031">
    <property type="entry name" value="Sulfate adenylyltransferase subunit 1"/>
    <property type="match status" value="1"/>
</dbReference>
<dbReference type="FunFam" id="3.40.50.300:FF:000119">
    <property type="entry name" value="Sulfate adenylyltransferase subunit 1"/>
    <property type="match status" value="1"/>
</dbReference>
<dbReference type="Gene3D" id="3.40.50.300">
    <property type="entry name" value="P-loop containing nucleotide triphosphate hydrolases"/>
    <property type="match status" value="1"/>
</dbReference>
<dbReference type="Gene3D" id="2.40.30.10">
    <property type="entry name" value="Translation factors"/>
    <property type="match status" value="2"/>
</dbReference>
<dbReference type="HAMAP" id="MF_00062">
    <property type="entry name" value="Sulf_adenylyltr_sub1"/>
    <property type="match status" value="1"/>
</dbReference>
<dbReference type="InterPro" id="IPR041757">
    <property type="entry name" value="CysN_GTP-bd"/>
</dbReference>
<dbReference type="InterPro" id="IPR044138">
    <property type="entry name" value="CysN_II"/>
</dbReference>
<dbReference type="InterPro" id="IPR044139">
    <property type="entry name" value="CysN_NoDQ_III"/>
</dbReference>
<dbReference type="InterPro" id="IPR031157">
    <property type="entry name" value="G_TR_CS"/>
</dbReference>
<dbReference type="InterPro" id="IPR054696">
    <property type="entry name" value="GTP-eEF1A_C"/>
</dbReference>
<dbReference type="InterPro" id="IPR027417">
    <property type="entry name" value="P-loop_NTPase"/>
</dbReference>
<dbReference type="InterPro" id="IPR005225">
    <property type="entry name" value="Small_GTP-bd"/>
</dbReference>
<dbReference type="InterPro" id="IPR011779">
    <property type="entry name" value="SO4_adenylTrfase_lsu"/>
</dbReference>
<dbReference type="InterPro" id="IPR000795">
    <property type="entry name" value="T_Tr_GTP-bd_dom"/>
</dbReference>
<dbReference type="InterPro" id="IPR050100">
    <property type="entry name" value="TRAFAC_GTPase_members"/>
</dbReference>
<dbReference type="InterPro" id="IPR009000">
    <property type="entry name" value="Transl_B-barrel_sf"/>
</dbReference>
<dbReference type="InterPro" id="IPR009001">
    <property type="entry name" value="Transl_elong_EF1A/Init_IF2_C"/>
</dbReference>
<dbReference type="NCBIfam" id="TIGR02034">
    <property type="entry name" value="CysN"/>
    <property type="match status" value="1"/>
</dbReference>
<dbReference type="NCBIfam" id="NF003478">
    <property type="entry name" value="PRK05124.1"/>
    <property type="match status" value="1"/>
</dbReference>
<dbReference type="NCBIfam" id="TIGR00231">
    <property type="entry name" value="small_GTP"/>
    <property type="match status" value="1"/>
</dbReference>
<dbReference type="PANTHER" id="PTHR23115">
    <property type="entry name" value="TRANSLATION FACTOR"/>
    <property type="match status" value="1"/>
</dbReference>
<dbReference type="Pfam" id="PF22594">
    <property type="entry name" value="GTP-eEF1A_C"/>
    <property type="match status" value="1"/>
</dbReference>
<dbReference type="Pfam" id="PF00009">
    <property type="entry name" value="GTP_EFTU"/>
    <property type="match status" value="1"/>
</dbReference>
<dbReference type="PRINTS" id="PR00315">
    <property type="entry name" value="ELONGATNFCT"/>
</dbReference>
<dbReference type="SUPFAM" id="SSF50465">
    <property type="entry name" value="EF-Tu/eEF-1alpha/eIF2-gamma C-terminal domain"/>
    <property type="match status" value="1"/>
</dbReference>
<dbReference type="SUPFAM" id="SSF52540">
    <property type="entry name" value="P-loop containing nucleoside triphosphate hydrolases"/>
    <property type="match status" value="1"/>
</dbReference>
<dbReference type="SUPFAM" id="SSF50447">
    <property type="entry name" value="Translation proteins"/>
    <property type="match status" value="1"/>
</dbReference>
<dbReference type="PROSITE" id="PS00301">
    <property type="entry name" value="G_TR_1"/>
    <property type="match status" value="1"/>
</dbReference>
<dbReference type="PROSITE" id="PS51722">
    <property type="entry name" value="G_TR_2"/>
    <property type="match status" value="1"/>
</dbReference>
<accession>Q57KJ0</accession>
<name>CYSN_SALCH</name>
<reference key="1">
    <citation type="journal article" date="2005" name="Nucleic Acids Res.">
        <title>The genome sequence of Salmonella enterica serovar Choleraesuis, a highly invasive and resistant zoonotic pathogen.</title>
        <authorList>
            <person name="Chiu C.-H."/>
            <person name="Tang P."/>
            <person name="Chu C."/>
            <person name="Hu S."/>
            <person name="Bao Q."/>
            <person name="Yu J."/>
            <person name="Chou Y.-Y."/>
            <person name="Wang H.-S."/>
            <person name="Lee Y.-S."/>
        </authorList>
    </citation>
    <scope>NUCLEOTIDE SEQUENCE [LARGE SCALE GENOMIC DNA]</scope>
    <source>
        <strain>SC-B67</strain>
    </source>
</reference>
<organism>
    <name type="scientific">Salmonella choleraesuis (strain SC-B67)</name>
    <dbReference type="NCBI Taxonomy" id="321314"/>
    <lineage>
        <taxon>Bacteria</taxon>
        <taxon>Pseudomonadati</taxon>
        <taxon>Pseudomonadota</taxon>
        <taxon>Gammaproteobacteria</taxon>
        <taxon>Enterobacterales</taxon>
        <taxon>Enterobacteriaceae</taxon>
        <taxon>Salmonella</taxon>
    </lineage>
</organism>
<sequence>MNTILAQQIANEGGVEAWMIAQQHKSLLRFLTCGSVDDGKSTLIGRLLHDTLQIYEDQLSSLHNDSKRHGTQGEKLDLALLVDGLQAEREQGITIDVAYRYFSTEKRKFIIADTPGHEQYTRNMATGASTCDLAILLIDARKGVLDQTRRHSFISTLLGIKHLVVAINKMDLVGYREETFARIREDYLTFAEQLPGDLDIRFVPLSALEGDNVAAQSANMRWYSGPTLLEVLETVDIQRAVDRQPMRFPVQYVNRPNLDFRGYAGTLASGSVKVGERIKVLPSGVESSVARIVTFDGDKEEACAGEAITLVLNDDIDISRGDLLLAANETLAPARHAAIDVVWMAEQPLAPGQSYDVKLAGKKTRARIEAIRYQIDINNLTQRDVESLPLNGIGLVEMTFDEPLALDIYQQNPVTGGLIFIDRLSNVTVGAGMVRELDERGATPSVEYSAFELELNALVRRHFPHWDARDLLGDKHGAA</sequence>
<gene>
    <name evidence="2" type="primary">cysN</name>
    <name type="ordered locus">SCH_2866</name>
</gene>
<feature type="chain" id="PRO_1000008907" description="Sulfate adenylyltransferase subunit 1">
    <location>
        <begin position="1"/>
        <end position="479"/>
    </location>
</feature>
<feature type="domain" description="tr-type G">
    <location>
        <begin position="25"/>
        <end position="239"/>
    </location>
</feature>
<feature type="region of interest" description="G1" evidence="1">
    <location>
        <begin position="34"/>
        <end position="41"/>
    </location>
</feature>
<feature type="region of interest" description="G2" evidence="1">
    <location>
        <begin position="92"/>
        <end position="96"/>
    </location>
</feature>
<feature type="region of interest" description="G3" evidence="1">
    <location>
        <begin position="113"/>
        <end position="116"/>
    </location>
</feature>
<feature type="region of interest" description="G4" evidence="1">
    <location>
        <begin position="168"/>
        <end position="171"/>
    </location>
</feature>
<feature type="region of interest" description="G5" evidence="1">
    <location>
        <begin position="206"/>
        <end position="208"/>
    </location>
</feature>
<feature type="binding site" evidence="2">
    <location>
        <begin position="34"/>
        <end position="41"/>
    </location>
    <ligand>
        <name>GTP</name>
        <dbReference type="ChEBI" id="CHEBI:37565"/>
    </ligand>
</feature>
<feature type="binding site" evidence="2">
    <location>
        <begin position="113"/>
        <end position="117"/>
    </location>
    <ligand>
        <name>GTP</name>
        <dbReference type="ChEBI" id="CHEBI:37565"/>
    </ligand>
</feature>
<feature type="binding site" evidence="2">
    <location>
        <begin position="168"/>
        <end position="171"/>
    </location>
    <ligand>
        <name>GTP</name>
        <dbReference type="ChEBI" id="CHEBI:37565"/>
    </ligand>
</feature>
<protein>
    <recommendedName>
        <fullName evidence="2">Sulfate adenylyltransferase subunit 1</fullName>
        <ecNumber evidence="2">2.7.7.4</ecNumber>
    </recommendedName>
    <alternativeName>
        <fullName evidence="2">ATP-sulfurylase large subunit</fullName>
    </alternativeName>
    <alternativeName>
        <fullName evidence="2">Sulfate adenylate transferase</fullName>
        <shortName evidence="2">SAT</shortName>
    </alternativeName>
</protein>
<comment type="function">
    <text evidence="2">With CysD forms the ATP sulfurylase (ATPS) that catalyzes the adenylation of sulfate producing adenosine 5'-phosphosulfate (APS) and diphosphate, the first enzymatic step in sulfur assimilation pathway. APS synthesis involves the formation of a high-energy phosphoric-sulfuric acid anhydride bond driven by GTP hydrolysis by CysN coupled to ATP hydrolysis by CysD.</text>
</comment>
<comment type="catalytic activity">
    <reaction evidence="2">
        <text>sulfate + ATP + H(+) = adenosine 5'-phosphosulfate + diphosphate</text>
        <dbReference type="Rhea" id="RHEA:18133"/>
        <dbReference type="ChEBI" id="CHEBI:15378"/>
        <dbReference type="ChEBI" id="CHEBI:16189"/>
        <dbReference type="ChEBI" id="CHEBI:30616"/>
        <dbReference type="ChEBI" id="CHEBI:33019"/>
        <dbReference type="ChEBI" id="CHEBI:58243"/>
        <dbReference type="EC" id="2.7.7.4"/>
    </reaction>
</comment>
<comment type="pathway">
    <text evidence="2">Sulfur metabolism; hydrogen sulfide biosynthesis; sulfite from sulfate: step 1/3.</text>
</comment>
<comment type="subunit">
    <text evidence="2">Heterodimer composed of CysD, the smaller subunit, and CysN.</text>
</comment>
<comment type="similarity">
    <text evidence="2">Belongs to the TRAFAC class translation factor GTPase superfamily. Classic translation factor GTPase family. CysN/NodQ subfamily.</text>
</comment>
<proteinExistence type="inferred from homology"/>
<evidence type="ECO:0000250" key="1"/>
<evidence type="ECO:0000255" key="2">
    <source>
        <dbReference type="HAMAP-Rule" id="MF_00062"/>
    </source>
</evidence>